<name>RSMA_RIPO1</name>
<protein>
    <recommendedName>
        <fullName evidence="1">Ribosomal RNA small subunit methyltransferase A</fullName>
        <ecNumber evidence="1">2.1.1.182</ecNumber>
    </recommendedName>
    <alternativeName>
        <fullName evidence="1">16S rRNA (adenine(1518)-N(6)/adenine(1519)-N(6))-dimethyltransferase</fullName>
    </alternativeName>
    <alternativeName>
        <fullName evidence="1">16S rRNA dimethyladenosine transferase</fullName>
    </alternativeName>
    <alternativeName>
        <fullName evidence="1">16S rRNA dimethylase</fullName>
    </alternativeName>
    <alternativeName>
        <fullName evidence="1">S-adenosylmethionine-6-N', N'-adenosyl(rRNA) dimethyltransferase</fullName>
    </alternativeName>
</protein>
<reference key="1">
    <citation type="journal article" date="2011" name="MBio">
        <title>Novel metabolic attributes of the genus Cyanothece, comprising a group of unicellular nitrogen-fixing Cyanobacteria.</title>
        <authorList>
            <person name="Bandyopadhyay A."/>
            <person name="Elvitigala T."/>
            <person name="Welsh E."/>
            <person name="Stockel J."/>
            <person name="Liberton M."/>
            <person name="Min H."/>
            <person name="Sherman L.A."/>
            <person name="Pakrasi H.B."/>
        </authorList>
    </citation>
    <scope>NUCLEOTIDE SEQUENCE [LARGE SCALE GENOMIC DNA]</scope>
    <source>
        <strain>PCC 8801 / RF-1</strain>
    </source>
</reference>
<evidence type="ECO:0000255" key="1">
    <source>
        <dbReference type="HAMAP-Rule" id="MF_00607"/>
    </source>
</evidence>
<organism>
    <name type="scientific">Rippkaea orientalis (strain PCC 8801 / RF-1)</name>
    <name type="common">Cyanothece sp. (strain PCC 8801)</name>
    <dbReference type="NCBI Taxonomy" id="41431"/>
    <lineage>
        <taxon>Bacteria</taxon>
        <taxon>Bacillati</taxon>
        <taxon>Cyanobacteriota</taxon>
        <taxon>Cyanophyceae</taxon>
        <taxon>Oscillatoriophycideae</taxon>
        <taxon>Chroococcales</taxon>
        <taxon>Aphanothecaceae</taxon>
        <taxon>Rippkaea</taxon>
        <taxon>Rippkaea orientalis</taxon>
    </lineage>
</organism>
<proteinExistence type="inferred from homology"/>
<accession>B7JWJ7</accession>
<comment type="function">
    <text evidence="1">Specifically dimethylates two adjacent adenosines (A1518 and A1519) in the loop of a conserved hairpin near the 3'-end of 16S rRNA in the 30S particle. May play a critical role in biogenesis of 30S subunits.</text>
</comment>
<comment type="catalytic activity">
    <reaction evidence="1">
        <text>adenosine(1518)/adenosine(1519) in 16S rRNA + 4 S-adenosyl-L-methionine = N(6)-dimethyladenosine(1518)/N(6)-dimethyladenosine(1519) in 16S rRNA + 4 S-adenosyl-L-homocysteine + 4 H(+)</text>
        <dbReference type="Rhea" id="RHEA:19609"/>
        <dbReference type="Rhea" id="RHEA-COMP:10232"/>
        <dbReference type="Rhea" id="RHEA-COMP:10233"/>
        <dbReference type="ChEBI" id="CHEBI:15378"/>
        <dbReference type="ChEBI" id="CHEBI:57856"/>
        <dbReference type="ChEBI" id="CHEBI:59789"/>
        <dbReference type="ChEBI" id="CHEBI:74411"/>
        <dbReference type="ChEBI" id="CHEBI:74493"/>
        <dbReference type="EC" id="2.1.1.182"/>
    </reaction>
</comment>
<comment type="subcellular location">
    <subcellularLocation>
        <location evidence="1">Cytoplasm</location>
    </subcellularLocation>
</comment>
<comment type="similarity">
    <text evidence="1">Belongs to the class I-like SAM-binding methyltransferase superfamily. rRNA adenine N(6)-methyltransferase family. RsmA subfamily.</text>
</comment>
<sequence length="272" mass="30804">MPQPRKRFAQHWLRSETALDQIIEAAQLNMSDLVLEIGPGTGILTRRLLPLVQSIVAVELDRDLCYRLAKSFGNFNHFLLLEGDILSLDLTTQLEQFPQFQPINKVVANIPYNITSPILEKLLGSIAHPQHPSYELIVLLMQKEVAQRIVASPQSKAYGALSVRTQYLAQCDYICEVPSKAFDPPPKVDSAVIRLTPRSLETPAINPQKLDQLVKLGFANRRKMLHNNLKSIIDKDHLTLLLDQLQINPQVRAEELSLEQWIMFSNLLETVS</sequence>
<feature type="chain" id="PRO_1000130266" description="Ribosomal RNA small subunit methyltransferase A">
    <location>
        <begin position="1"/>
        <end position="272"/>
    </location>
</feature>
<feature type="binding site" evidence="1">
    <location>
        <position position="11"/>
    </location>
    <ligand>
        <name>S-adenosyl-L-methionine</name>
        <dbReference type="ChEBI" id="CHEBI:59789"/>
    </ligand>
</feature>
<feature type="binding site" evidence="1">
    <location>
        <position position="13"/>
    </location>
    <ligand>
        <name>S-adenosyl-L-methionine</name>
        <dbReference type="ChEBI" id="CHEBI:59789"/>
    </ligand>
</feature>
<feature type="binding site" evidence="1">
    <location>
        <position position="38"/>
    </location>
    <ligand>
        <name>S-adenosyl-L-methionine</name>
        <dbReference type="ChEBI" id="CHEBI:59789"/>
    </ligand>
</feature>
<feature type="binding site" evidence="1">
    <location>
        <position position="59"/>
    </location>
    <ligand>
        <name>S-adenosyl-L-methionine</name>
        <dbReference type="ChEBI" id="CHEBI:59789"/>
    </ligand>
</feature>
<feature type="binding site" evidence="1">
    <location>
        <position position="84"/>
    </location>
    <ligand>
        <name>S-adenosyl-L-methionine</name>
        <dbReference type="ChEBI" id="CHEBI:59789"/>
    </ligand>
</feature>
<feature type="binding site" evidence="1">
    <location>
        <position position="109"/>
    </location>
    <ligand>
        <name>S-adenosyl-L-methionine</name>
        <dbReference type="ChEBI" id="CHEBI:59789"/>
    </ligand>
</feature>
<keyword id="KW-0963">Cytoplasm</keyword>
<keyword id="KW-0489">Methyltransferase</keyword>
<keyword id="KW-1185">Reference proteome</keyword>
<keyword id="KW-0694">RNA-binding</keyword>
<keyword id="KW-0698">rRNA processing</keyword>
<keyword id="KW-0949">S-adenosyl-L-methionine</keyword>
<keyword id="KW-0808">Transferase</keyword>
<gene>
    <name evidence="1" type="primary">rsmA</name>
    <name evidence="1" type="synonym">ksgA</name>
    <name type="ordered locus">PCC8801_4416</name>
</gene>
<dbReference type="EC" id="2.1.1.182" evidence="1"/>
<dbReference type="EMBL" id="CP001287">
    <property type="protein sequence ID" value="ACK68338.1"/>
    <property type="molecule type" value="Genomic_DNA"/>
</dbReference>
<dbReference type="RefSeq" id="WP_015957431.1">
    <property type="nucleotide sequence ID" value="NC_011726.1"/>
</dbReference>
<dbReference type="SMR" id="B7JWJ7"/>
<dbReference type="STRING" id="41431.PCC8801_4416"/>
<dbReference type="KEGG" id="cyp:PCC8801_4416"/>
<dbReference type="eggNOG" id="COG0030">
    <property type="taxonomic scope" value="Bacteria"/>
</dbReference>
<dbReference type="HOGENOM" id="CLU_041220_0_1_3"/>
<dbReference type="OrthoDB" id="9814755at2"/>
<dbReference type="Proteomes" id="UP000008204">
    <property type="component" value="Chromosome"/>
</dbReference>
<dbReference type="GO" id="GO:0005829">
    <property type="term" value="C:cytosol"/>
    <property type="evidence" value="ECO:0007669"/>
    <property type="project" value="TreeGrafter"/>
</dbReference>
<dbReference type="GO" id="GO:0052908">
    <property type="term" value="F:16S rRNA (adenine(1518)-N(6)/adenine(1519)-N(6))-dimethyltransferase activity"/>
    <property type="evidence" value="ECO:0007669"/>
    <property type="project" value="UniProtKB-EC"/>
</dbReference>
<dbReference type="GO" id="GO:0003723">
    <property type="term" value="F:RNA binding"/>
    <property type="evidence" value="ECO:0007669"/>
    <property type="project" value="UniProtKB-KW"/>
</dbReference>
<dbReference type="FunFam" id="1.10.8.100:FF:000001">
    <property type="entry name" value="Ribosomal RNA small subunit methyltransferase A"/>
    <property type="match status" value="1"/>
</dbReference>
<dbReference type="FunFam" id="3.40.50.150:FF:000023">
    <property type="entry name" value="Ribosomal RNA small subunit methyltransferase A"/>
    <property type="match status" value="1"/>
</dbReference>
<dbReference type="Gene3D" id="1.10.8.100">
    <property type="entry name" value="Ribosomal RNA adenine dimethylase-like, domain 2"/>
    <property type="match status" value="1"/>
</dbReference>
<dbReference type="Gene3D" id="3.40.50.150">
    <property type="entry name" value="Vaccinia Virus protein VP39"/>
    <property type="match status" value="1"/>
</dbReference>
<dbReference type="HAMAP" id="MF_00607">
    <property type="entry name" value="16SrRNA_methyltr_A"/>
    <property type="match status" value="1"/>
</dbReference>
<dbReference type="InterPro" id="IPR001737">
    <property type="entry name" value="KsgA/Erm"/>
</dbReference>
<dbReference type="InterPro" id="IPR023165">
    <property type="entry name" value="rRNA_Ade_diMease-like_C"/>
</dbReference>
<dbReference type="InterPro" id="IPR020596">
    <property type="entry name" value="rRNA_Ade_Mease_Trfase_CS"/>
</dbReference>
<dbReference type="InterPro" id="IPR020598">
    <property type="entry name" value="rRNA_Ade_methylase_Trfase_N"/>
</dbReference>
<dbReference type="InterPro" id="IPR011530">
    <property type="entry name" value="rRNA_adenine_dimethylase"/>
</dbReference>
<dbReference type="InterPro" id="IPR029063">
    <property type="entry name" value="SAM-dependent_MTases_sf"/>
</dbReference>
<dbReference type="NCBIfam" id="TIGR00755">
    <property type="entry name" value="ksgA"/>
    <property type="match status" value="1"/>
</dbReference>
<dbReference type="PANTHER" id="PTHR11727">
    <property type="entry name" value="DIMETHYLADENOSINE TRANSFERASE"/>
    <property type="match status" value="1"/>
</dbReference>
<dbReference type="PANTHER" id="PTHR11727:SF7">
    <property type="entry name" value="DIMETHYLADENOSINE TRANSFERASE-RELATED"/>
    <property type="match status" value="1"/>
</dbReference>
<dbReference type="Pfam" id="PF00398">
    <property type="entry name" value="RrnaAD"/>
    <property type="match status" value="1"/>
</dbReference>
<dbReference type="SMART" id="SM00650">
    <property type="entry name" value="rADc"/>
    <property type="match status" value="1"/>
</dbReference>
<dbReference type="SUPFAM" id="SSF53335">
    <property type="entry name" value="S-adenosyl-L-methionine-dependent methyltransferases"/>
    <property type="match status" value="1"/>
</dbReference>
<dbReference type="PROSITE" id="PS01131">
    <property type="entry name" value="RRNA_A_DIMETH"/>
    <property type="match status" value="1"/>
</dbReference>
<dbReference type="PROSITE" id="PS51689">
    <property type="entry name" value="SAM_RNA_A_N6_MT"/>
    <property type="match status" value="1"/>
</dbReference>